<organism>
    <name type="scientific">Anaeromyxobacter sp. (strain Fw109-5)</name>
    <dbReference type="NCBI Taxonomy" id="404589"/>
    <lineage>
        <taxon>Bacteria</taxon>
        <taxon>Pseudomonadati</taxon>
        <taxon>Myxococcota</taxon>
        <taxon>Myxococcia</taxon>
        <taxon>Myxococcales</taxon>
        <taxon>Cystobacterineae</taxon>
        <taxon>Anaeromyxobacteraceae</taxon>
        <taxon>Anaeromyxobacter</taxon>
    </lineage>
</organism>
<gene>
    <name evidence="1" type="primary">ndk</name>
    <name type="ordered locus">Anae109_2182</name>
</gene>
<proteinExistence type="inferred from homology"/>
<protein>
    <recommendedName>
        <fullName evidence="1">Nucleoside diphosphate kinase</fullName>
        <shortName evidence="1">NDK</shortName>
        <shortName evidence="1">NDP kinase</shortName>
        <ecNumber evidence="1">2.7.4.6</ecNumber>
    </recommendedName>
    <alternativeName>
        <fullName evidence="1">Nucleoside-2-P kinase</fullName>
    </alternativeName>
</protein>
<evidence type="ECO:0000255" key="1">
    <source>
        <dbReference type="HAMAP-Rule" id="MF_00451"/>
    </source>
</evidence>
<accession>A7HCD8</accession>
<keyword id="KW-0067">ATP-binding</keyword>
<keyword id="KW-0963">Cytoplasm</keyword>
<keyword id="KW-0418">Kinase</keyword>
<keyword id="KW-0460">Magnesium</keyword>
<keyword id="KW-0479">Metal-binding</keyword>
<keyword id="KW-0546">Nucleotide metabolism</keyword>
<keyword id="KW-0547">Nucleotide-binding</keyword>
<keyword id="KW-0597">Phosphoprotein</keyword>
<keyword id="KW-1185">Reference proteome</keyword>
<keyword id="KW-0808">Transferase</keyword>
<comment type="function">
    <text evidence="1">Major role in the synthesis of nucleoside triphosphates other than ATP. The ATP gamma phosphate is transferred to the NDP beta phosphate via a ping-pong mechanism, using a phosphorylated active-site intermediate.</text>
</comment>
<comment type="catalytic activity">
    <reaction evidence="1">
        <text>a 2'-deoxyribonucleoside 5'-diphosphate + ATP = a 2'-deoxyribonucleoside 5'-triphosphate + ADP</text>
        <dbReference type="Rhea" id="RHEA:44640"/>
        <dbReference type="ChEBI" id="CHEBI:30616"/>
        <dbReference type="ChEBI" id="CHEBI:61560"/>
        <dbReference type="ChEBI" id="CHEBI:73316"/>
        <dbReference type="ChEBI" id="CHEBI:456216"/>
        <dbReference type="EC" id="2.7.4.6"/>
    </reaction>
</comment>
<comment type="catalytic activity">
    <reaction evidence="1">
        <text>a ribonucleoside 5'-diphosphate + ATP = a ribonucleoside 5'-triphosphate + ADP</text>
        <dbReference type="Rhea" id="RHEA:18113"/>
        <dbReference type="ChEBI" id="CHEBI:30616"/>
        <dbReference type="ChEBI" id="CHEBI:57930"/>
        <dbReference type="ChEBI" id="CHEBI:61557"/>
        <dbReference type="ChEBI" id="CHEBI:456216"/>
        <dbReference type="EC" id="2.7.4.6"/>
    </reaction>
</comment>
<comment type="cofactor">
    <cofactor evidence="1">
        <name>Mg(2+)</name>
        <dbReference type="ChEBI" id="CHEBI:18420"/>
    </cofactor>
</comment>
<comment type="subunit">
    <text evidence="1">Homotetramer.</text>
</comment>
<comment type="subcellular location">
    <subcellularLocation>
        <location evidence="1">Cytoplasm</location>
    </subcellularLocation>
</comment>
<comment type="similarity">
    <text evidence="1">Belongs to the NDK family.</text>
</comment>
<name>NDK_ANADF</name>
<feature type="chain" id="PRO_1000026206" description="Nucleoside diphosphate kinase">
    <location>
        <begin position="1"/>
        <end position="146"/>
    </location>
</feature>
<feature type="active site" description="Pros-phosphohistidine intermediate" evidence="1">
    <location>
        <position position="117"/>
    </location>
</feature>
<feature type="binding site" evidence="1">
    <location>
        <position position="11"/>
    </location>
    <ligand>
        <name>ATP</name>
        <dbReference type="ChEBI" id="CHEBI:30616"/>
    </ligand>
</feature>
<feature type="binding site" evidence="1">
    <location>
        <position position="59"/>
    </location>
    <ligand>
        <name>ATP</name>
        <dbReference type="ChEBI" id="CHEBI:30616"/>
    </ligand>
</feature>
<feature type="binding site" evidence="1">
    <location>
        <position position="87"/>
    </location>
    <ligand>
        <name>ATP</name>
        <dbReference type="ChEBI" id="CHEBI:30616"/>
    </ligand>
</feature>
<feature type="binding site" evidence="1">
    <location>
        <position position="93"/>
    </location>
    <ligand>
        <name>ATP</name>
        <dbReference type="ChEBI" id="CHEBI:30616"/>
    </ligand>
</feature>
<feature type="binding site" evidence="1">
    <location>
        <position position="104"/>
    </location>
    <ligand>
        <name>ATP</name>
        <dbReference type="ChEBI" id="CHEBI:30616"/>
    </ligand>
</feature>
<feature type="binding site" evidence="1">
    <location>
        <position position="114"/>
    </location>
    <ligand>
        <name>ATP</name>
        <dbReference type="ChEBI" id="CHEBI:30616"/>
    </ligand>
</feature>
<reference key="1">
    <citation type="journal article" date="2015" name="Genome Announc.">
        <title>Complete genome sequence of Anaeromyxobacter sp. Fw109-5, an anaerobic, metal-reducing bacterium isolated from a contaminated subsurface environment.</title>
        <authorList>
            <person name="Hwang C."/>
            <person name="Copeland A."/>
            <person name="Lucas S."/>
            <person name="Lapidus A."/>
            <person name="Barry K."/>
            <person name="Glavina Del Rio T."/>
            <person name="Dalin E."/>
            <person name="Tice H."/>
            <person name="Pitluck S."/>
            <person name="Sims D."/>
            <person name="Brettin T."/>
            <person name="Bruce D.C."/>
            <person name="Detter J.C."/>
            <person name="Han C.S."/>
            <person name="Schmutz J."/>
            <person name="Larimer F.W."/>
            <person name="Land M.L."/>
            <person name="Hauser L.J."/>
            <person name="Kyrpides N."/>
            <person name="Lykidis A."/>
            <person name="Richardson P."/>
            <person name="Belieav A."/>
            <person name="Sanford R.A."/>
            <person name="Loeffler F.E."/>
            <person name="Fields M.W."/>
        </authorList>
    </citation>
    <scope>NUCLEOTIDE SEQUENCE [LARGE SCALE GENOMIC DNA]</scope>
    <source>
        <strain>Fw109-5</strain>
    </source>
</reference>
<dbReference type="EC" id="2.7.4.6" evidence="1"/>
<dbReference type="EMBL" id="CP000769">
    <property type="protein sequence ID" value="ABS26384.1"/>
    <property type="molecule type" value="Genomic_DNA"/>
</dbReference>
<dbReference type="RefSeq" id="WP_012096966.1">
    <property type="nucleotide sequence ID" value="NC_009675.1"/>
</dbReference>
<dbReference type="SMR" id="A7HCD8"/>
<dbReference type="STRING" id="404589.Anae109_2182"/>
<dbReference type="KEGG" id="afw:Anae109_2182"/>
<dbReference type="eggNOG" id="COG0105">
    <property type="taxonomic scope" value="Bacteria"/>
</dbReference>
<dbReference type="HOGENOM" id="CLU_060216_8_1_7"/>
<dbReference type="OrthoDB" id="9801161at2"/>
<dbReference type="Proteomes" id="UP000006382">
    <property type="component" value="Chromosome"/>
</dbReference>
<dbReference type="GO" id="GO:0005737">
    <property type="term" value="C:cytoplasm"/>
    <property type="evidence" value="ECO:0007669"/>
    <property type="project" value="UniProtKB-SubCell"/>
</dbReference>
<dbReference type="GO" id="GO:0005524">
    <property type="term" value="F:ATP binding"/>
    <property type="evidence" value="ECO:0007669"/>
    <property type="project" value="UniProtKB-UniRule"/>
</dbReference>
<dbReference type="GO" id="GO:0046872">
    <property type="term" value="F:metal ion binding"/>
    <property type="evidence" value="ECO:0007669"/>
    <property type="project" value="UniProtKB-KW"/>
</dbReference>
<dbReference type="GO" id="GO:0004550">
    <property type="term" value="F:nucleoside diphosphate kinase activity"/>
    <property type="evidence" value="ECO:0007669"/>
    <property type="project" value="UniProtKB-UniRule"/>
</dbReference>
<dbReference type="GO" id="GO:0006241">
    <property type="term" value="P:CTP biosynthetic process"/>
    <property type="evidence" value="ECO:0007669"/>
    <property type="project" value="UniProtKB-UniRule"/>
</dbReference>
<dbReference type="GO" id="GO:0006183">
    <property type="term" value="P:GTP biosynthetic process"/>
    <property type="evidence" value="ECO:0007669"/>
    <property type="project" value="UniProtKB-UniRule"/>
</dbReference>
<dbReference type="GO" id="GO:0006228">
    <property type="term" value="P:UTP biosynthetic process"/>
    <property type="evidence" value="ECO:0007669"/>
    <property type="project" value="UniProtKB-UniRule"/>
</dbReference>
<dbReference type="CDD" id="cd04413">
    <property type="entry name" value="NDPk_I"/>
    <property type="match status" value="1"/>
</dbReference>
<dbReference type="FunFam" id="3.30.70.141:FF:000001">
    <property type="entry name" value="Nucleoside diphosphate kinase"/>
    <property type="match status" value="1"/>
</dbReference>
<dbReference type="Gene3D" id="3.30.70.141">
    <property type="entry name" value="Nucleoside diphosphate kinase-like domain"/>
    <property type="match status" value="1"/>
</dbReference>
<dbReference type="HAMAP" id="MF_00451">
    <property type="entry name" value="NDP_kinase"/>
    <property type="match status" value="1"/>
</dbReference>
<dbReference type="InterPro" id="IPR034907">
    <property type="entry name" value="NDK-like_dom"/>
</dbReference>
<dbReference type="InterPro" id="IPR036850">
    <property type="entry name" value="NDK-like_dom_sf"/>
</dbReference>
<dbReference type="InterPro" id="IPR001564">
    <property type="entry name" value="Nucleoside_diP_kinase"/>
</dbReference>
<dbReference type="NCBIfam" id="NF001908">
    <property type="entry name" value="PRK00668.1"/>
    <property type="match status" value="1"/>
</dbReference>
<dbReference type="PANTHER" id="PTHR11349">
    <property type="entry name" value="NUCLEOSIDE DIPHOSPHATE KINASE"/>
    <property type="match status" value="1"/>
</dbReference>
<dbReference type="Pfam" id="PF00334">
    <property type="entry name" value="NDK"/>
    <property type="match status" value="1"/>
</dbReference>
<dbReference type="PRINTS" id="PR01243">
    <property type="entry name" value="NUCDPKINASE"/>
</dbReference>
<dbReference type="SMART" id="SM00562">
    <property type="entry name" value="NDK"/>
    <property type="match status" value="1"/>
</dbReference>
<dbReference type="SUPFAM" id="SSF54919">
    <property type="entry name" value="Nucleoside diphosphate kinase, NDK"/>
    <property type="match status" value="1"/>
</dbReference>
<dbReference type="PROSITE" id="PS51374">
    <property type="entry name" value="NDPK_LIKE"/>
    <property type="match status" value="1"/>
</dbReference>
<sequence length="146" mass="15928">MANERTLSIIKPDGVEKGVIGQVIARFEKAGLKPIAMKMTHLSQAEAEGFYAVHKARPFFNDLVKFMTSGPVVLMVLEGEGAVAKNREIMGATDPAKAAAGTIRKDFASNIEKNTVHGSDSAENAKIEVSYFFPETAIHTYEWKKA</sequence>